<dbReference type="EMBL" id="EF564260">
    <property type="protein sequence ID" value="ABQ51187.1"/>
    <property type="molecule type" value="mRNA"/>
</dbReference>
<dbReference type="RefSeq" id="NP_001272561.1">
    <property type="nucleotide sequence ID" value="NM_001285632.1"/>
</dbReference>
<dbReference type="RefSeq" id="XP_005687611.1">
    <property type="nucleotide sequence ID" value="XM_005687554.3"/>
</dbReference>
<dbReference type="SMR" id="A5JSS2"/>
<dbReference type="STRING" id="9925.ENSCHIP00000021534"/>
<dbReference type="Ensembl" id="ENSCHIT00000029381.1">
    <property type="protein sequence ID" value="ENSCHIP00000021534.1"/>
    <property type="gene ID" value="ENSCHIG00000019833.1"/>
</dbReference>
<dbReference type="Ensembl" id="ENSCHIT00000032472.1">
    <property type="protein sequence ID" value="ENSCHIP00000024612.1"/>
    <property type="gene ID" value="ENSCHIG00000021720.1"/>
</dbReference>
<dbReference type="Ensembl" id="ENSCHIT00020017562">
    <property type="protein sequence ID" value="ENSCHIP00020013102"/>
    <property type="gene ID" value="ENSCHIG00020008561"/>
</dbReference>
<dbReference type="Ensembl" id="ENSCHIT00040044319">
    <property type="protein sequence ID" value="ENSCHIP00040036120"/>
    <property type="gene ID" value="ENSCHIG00040020357"/>
</dbReference>
<dbReference type="GeneID" id="100860777"/>
<dbReference type="KEGG" id="chx:100860777"/>
<dbReference type="KEGG" id="chx:108634465"/>
<dbReference type="CTD" id="6144"/>
<dbReference type="GeneTree" id="ENSGT00950000182922"/>
<dbReference type="OrthoDB" id="9868372at2759"/>
<dbReference type="Proteomes" id="UP000291000">
    <property type="component" value="Chromosome 12"/>
</dbReference>
<dbReference type="Proteomes" id="UP000291000">
    <property type="component" value="Unassembled WGS sequence"/>
</dbReference>
<dbReference type="Proteomes" id="UP000694566">
    <property type="component" value="Unplaced"/>
</dbReference>
<dbReference type="Bgee" id="ENSCHIG00000019833">
    <property type="expression patterns" value="Expressed in spleen and 16 other cell types or tissues"/>
</dbReference>
<dbReference type="GO" id="GO:0005829">
    <property type="term" value="C:cytosol"/>
    <property type="evidence" value="ECO:0007669"/>
    <property type="project" value="UniProtKB-SubCell"/>
</dbReference>
<dbReference type="GO" id="GO:0005783">
    <property type="term" value="C:endoplasmic reticulum"/>
    <property type="evidence" value="ECO:0007669"/>
    <property type="project" value="UniProtKB-SubCell"/>
</dbReference>
<dbReference type="GO" id="GO:0031090">
    <property type="term" value="C:organelle membrane"/>
    <property type="evidence" value="ECO:0007669"/>
    <property type="project" value="UniProtKB-ARBA"/>
</dbReference>
<dbReference type="GO" id="GO:1990904">
    <property type="term" value="C:ribonucleoprotein complex"/>
    <property type="evidence" value="ECO:0007669"/>
    <property type="project" value="UniProtKB-KW"/>
</dbReference>
<dbReference type="GO" id="GO:0005840">
    <property type="term" value="C:ribosome"/>
    <property type="evidence" value="ECO:0007669"/>
    <property type="project" value="UniProtKB-KW"/>
</dbReference>
<dbReference type="GO" id="GO:0003735">
    <property type="term" value="F:structural constituent of ribosome"/>
    <property type="evidence" value="ECO:0007669"/>
    <property type="project" value="InterPro"/>
</dbReference>
<dbReference type="GO" id="GO:0006412">
    <property type="term" value="P:translation"/>
    <property type="evidence" value="ECO:0007669"/>
    <property type="project" value="InterPro"/>
</dbReference>
<dbReference type="FunFam" id="2.30.30.70:FF:000001">
    <property type="entry name" value="60S ribosomal protein L21"/>
    <property type="match status" value="1"/>
</dbReference>
<dbReference type="FunFam" id="6.10.250.3260:FF:000001">
    <property type="entry name" value="60S ribosomal protein L21"/>
    <property type="match status" value="1"/>
</dbReference>
<dbReference type="Gene3D" id="6.10.250.3260">
    <property type="match status" value="1"/>
</dbReference>
<dbReference type="Gene3D" id="2.30.30.70">
    <property type="entry name" value="Ribosomal protein L21"/>
    <property type="match status" value="1"/>
</dbReference>
<dbReference type="InterPro" id="IPR001147">
    <property type="entry name" value="Ribosomal_eL21"/>
</dbReference>
<dbReference type="InterPro" id="IPR018259">
    <property type="entry name" value="Ribosomal_eL21_CS"/>
</dbReference>
<dbReference type="InterPro" id="IPR036948">
    <property type="entry name" value="Ribosomal_eL21_sf"/>
</dbReference>
<dbReference type="InterPro" id="IPR008991">
    <property type="entry name" value="Translation_prot_SH3-like_sf"/>
</dbReference>
<dbReference type="PANTHER" id="PTHR20981">
    <property type="entry name" value="60S RIBOSOMAL PROTEIN L21"/>
    <property type="match status" value="1"/>
</dbReference>
<dbReference type="Pfam" id="PF01157">
    <property type="entry name" value="Ribosomal_L21e"/>
    <property type="match status" value="1"/>
</dbReference>
<dbReference type="SUPFAM" id="SSF50104">
    <property type="entry name" value="Translation proteins SH3-like domain"/>
    <property type="match status" value="1"/>
</dbReference>
<dbReference type="PROSITE" id="PS01171">
    <property type="entry name" value="RIBOSOMAL_L21E"/>
    <property type="match status" value="1"/>
</dbReference>
<comment type="function">
    <text evidence="1">Component of the large ribosomal subunit. The ribosome is a large ribonucleoprotein complex responsible for the synthesis of proteins in the cell.</text>
</comment>
<comment type="subunit">
    <text evidence="1">Component of the large ribosomal subunit.</text>
</comment>
<comment type="subcellular location">
    <subcellularLocation>
        <location evidence="1">Cytoplasm</location>
        <location evidence="1">Cytosol</location>
    </subcellularLocation>
    <subcellularLocation>
        <location evidence="1">Cytoplasm</location>
    </subcellularLocation>
    <subcellularLocation>
        <location evidence="2">Endoplasmic reticulum</location>
    </subcellularLocation>
    <text evidence="1 2">Detected on cytosolic polysomes (By similarity). Detected in ribosomes that are associated with the rough endoplasmic reticulum (By similarity).</text>
</comment>
<comment type="similarity">
    <text evidence="4">Belongs to the eukaryotic ribosomal protein eL21 family.</text>
</comment>
<name>RL21_CAPHI</name>
<protein>
    <recommendedName>
        <fullName evidence="4">Large ribosomal subunit protein eL21</fullName>
    </recommendedName>
    <alternativeName>
        <fullName>60S ribosomal protein L21</fullName>
    </alternativeName>
</protein>
<sequence length="160" mass="18607">MTNTKGKRRGTRYMFSRPFRKHGVVPLATYMRIYRKGDIVDIKGMGTVQKGMPHKCYHGKTGRVYNVTQHAVGIIVNKQVKGKILAKRINVRIEHIKHSKSRDSFLKRVKENDQKKKEAKEKGTWVQLKRQPAPPREAHFVRTNGKEPELLEPIPYEFMA</sequence>
<reference key="1">
    <citation type="submission" date="2007-04" db="EMBL/GenBank/DDBJ databases">
        <title>Primary expression profile analysis and novel gene discovery of Xinong Saanen dairy goat mammary gland.</title>
        <authorList>
            <person name="Han X.F."/>
            <person name="Luo J."/>
            <person name="Wu N."/>
            <person name="Matand K."/>
            <person name="Yang B.J."/>
            <person name="Wu H.J."/>
            <person name="Zhang L.J."/>
            <person name="Wang H.B."/>
            <person name="Qi Y."/>
        </authorList>
    </citation>
    <scope>NUCLEOTIDE SEQUENCE [LARGE SCALE MRNA]</scope>
    <source>
        <strain>Xinong Saanen</strain>
        <tissue>Mammary gland</tissue>
    </source>
</reference>
<evidence type="ECO:0000250" key="1">
    <source>
        <dbReference type="UniProtKB" id="P46778"/>
    </source>
</evidence>
<evidence type="ECO:0000250" key="2">
    <source>
        <dbReference type="UniProtKB" id="P49666"/>
    </source>
</evidence>
<evidence type="ECO:0000256" key="3">
    <source>
        <dbReference type="SAM" id="MobiDB-lite"/>
    </source>
</evidence>
<evidence type="ECO:0000305" key="4"/>
<keyword id="KW-0963">Cytoplasm</keyword>
<keyword id="KW-0256">Endoplasmic reticulum</keyword>
<keyword id="KW-1185">Reference proteome</keyword>
<keyword id="KW-0687">Ribonucleoprotein</keyword>
<keyword id="KW-0689">Ribosomal protein</keyword>
<feature type="chain" id="PRO_0000319298" description="Large ribosomal subunit protein eL21">
    <location>
        <begin position="1"/>
        <end position="160"/>
    </location>
</feature>
<feature type="region of interest" description="Disordered" evidence="3">
    <location>
        <begin position="112"/>
        <end position="145"/>
    </location>
</feature>
<feature type="compositionally biased region" description="Basic and acidic residues" evidence="3">
    <location>
        <begin position="112"/>
        <end position="123"/>
    </location>
</feature>
<feature type="compositionally biased region" description="Basic and acidic residues" evidence="3">
    <location>
        <begin position="136"/>
        <end position="145"/>
    </location>
</feature>
<proteinExistence type="evidence at transcript level"/>
<organism>
    <name type="scientific">Capra hircus</name>
    <name type="common">Goat</name>
    <dbReference type="NCBI Taxonomy" id="9925"/>
    <lineage>
        <taxon>Eukaryota</taxon>
        <taxon>Metazoa</taxon>
        <taxon>Chordata</taxon>
        <taxon>Craniata</taxon>
        <taxon>Vertebrata</taxon>
        <taxon>Euteleostomi</taxon>
        <taxon>Mammalia</taxon>
        <taxon>Eutheria</taxon>
        <taxon>Laurasiatheria</taxon>
        <taxon>Artiodactyla</taxon>
        <taxon>Ruminantia</taxon>
        <taxon>Pecora</taxon>
        <taxon>Bovidae</taxon>
        <taxon>Caprinae</taxon>
        <taxon>Capra</taxon>
    </lineage>
</organism>
<accession>A5JSS2</accession>
<gene>
    <name type="primary">RPL21</name>
</gene>